<proteinExistence type="inferred from homology"/>
<evidence type="ECO:0000255" key="1">
    <source>
        <dbReference type="HAMAP-Rule" id="MF_00503"/>
    </source>
</evidence>
<evidence type="ECO:0000305" key="2"/>
<comment type="function">
    <text evidence="1">Binds to the 23S rRNA.</text>
</comment>
<comment type="similarity">
    <text evidence="1">Belongs to the bacterial ribosomal protein bL9 family.</text>
</comment>
<gene>
    <name evidence="1" type="primary">rplI</name>
    <name type="ordered locus">BUAPTUC7_556</name>
</gene>
<accession>B8D883</accession>
<reference key="1">
    <citation type="journal article" date="2009" name="Science">
        <title>The dynamics and time scale of ongoing genomic erosion in symbiotic bacteria.</title>
        <authorList>
            <person name="Moran N.A."/>
            <person name="McLaughlin H.J."/>
            <person name="Sorek R."/>
        </authorList>
    </citation>
    <scope>NUCLEOTIDE SEQUENCE [LARGE SCALE GENOMIC DNA]</scope>
    <source>
        <strain>Tuc7</strain>
    </source>
</reference>
<dbReference type="EMBL" id="CP001158">
    <property type="protein sequence ID" value="ACL30348.1"/>
    <property type="molecule type" value="Genomic_DNA"/>
</dbReference>
<dbReference type="RefSeq" id="WP_009874510.1">
    <property type="nucleotide sequence ID" value="NC_011834.1"/>
</dbReference>
<dbReference type="SMR" id="B8D883"/>
<dbReference type="KEGG" id="bau:BUAPTUC7_556"/>
<dbReference type="HOGENOM" id="CLU_078938_4_1_6"/>
<dbReference type="GO" id="GO:1990904">
    <property type="term" value="C:ribonucleoprotein complex"/>
    <property type="evidence" value="ECO:0007669"/>
    <property type="project" value="UniProtKB-KW"/>
</dbReference>
<dbReference type="GO" id="GO:0005840">
    <property type="term" value="C:ribosome"/>
    <property type="evidence" value="ECO:0007669"/>
    <property type="project" value="UniProtKB-KW"/>
</dbReference>
<dbReference type="GO" id="GO:0019843">
    <property type="term" value="F:rRNA binding"/>
    <property type="evidence" value="ECO:0007669"/>
    <property type="project" value="UniProtKB-UniRule"/>
</dbReference>
<dbReference type="GO" id="GO:0003735">
    <property type="term" value="F:structural constituent of ribosome"/>
    <property type="evidence" value="ECO:0007669"/>
    <property type="project" value="InterPro"/>
</dbReference>
<dbReference type="GO" id="GO:0006412">
    <property type="term" value="P:translation"/>
    <property type="evidence" value="ECO:0007669"/>
    <property type="project" value="UniProtKB-UniRule"/>
</dbReference>
<dbReference type="Gene3D" id="3.10.430.100">
    <property type="entry name" value="Ribosomal protein L9, C-terminal domain"/>
    <property type="match status" value="1"/>
</dbReference>
<dbReference type="Gene3D" id="3.40.5.10">
    <property type="entry name" value="Ribosomal protein L9, N-terminal domain"/>
    <property type="match status" value="1"/>
</dbReference>
<dbReference type="HAMAP" id="MF_00503">
    <property type="entry name" value="Ribosomal_bL9"/>
    <property type="match status" value="1"/>
</dbReference>
<dbReference type="InterPro" id="IPR000244">
    <property type="entry name" value="Ribosomal_bL9"/>
</dbReference>
<dbReference type="InterPro" id="IPR009027">
    <property type="entry name" value="Ribosomal_bL9/RNase_H1_N"/>
</dbReference>
<dbReference type="InterPro" id="IPR020594">
    <property type="entry name" value="Ribosomal_bL9_bac/chp"/>
</dbReference>
<dbReference type="InterPro" id="IPR020069">
    <property type="entry name" value="Ribosomal_bL9_C"/>
</dbReference>
<dbReference type="InterPro" id="IPR036791">
    <property type="entry name" value="Ribosomal_bL9_C_sf"/>
</dbReference>
<dbReference type="InterPro" id="IPR020070">
    <property type="entry name" value="Ribosomal_bL9_N"/>
</dbReference>
<dbReference type="InterPro" id="IPR036935">
    <property type="entry name" value="Ribosomal_bL9_N_sf"/>
</dbReference>
<dbReference type="NCBIfam" id="TIGR00158">
    <property type="entry name" value="L9"/>
    <property type="match status" value="1"/>
</dbReference>
<dbReference type="PANTHER" id="PTHR21368">
    <property type="entry name" value="50S RIBOSOMAL PROTEIN L9"/>
    <property type="match status" value="1"/>
</dbReference>
<dbReference type="Pfam" id="PF03948">
    <property type="entry name" value="Ribosomal_L9_C"/>
    <property type="match status" value="1"/>
</dbReference>
<dbReference type="Pfam" id="PF01281">
    <property type="entry name" value="Ribosomal_L9_N"/>
    <property type="match status" value="1"/>
</dbReference>
<dbReference type="SUPFAM" id="SSF55658">
    <property type="entry name" value="L9 N-domain-like"/>
    <property type="match status" value="1"/>
</dbReference>
<dbReference type="SUPFAM" id="SSF55653">
    <property type="entry name" value="Ribosomal protein L9 C-domain"/>
    <property type="match status" value="1"/>
</dbReference>
<dbReference type="PROSITE" id="PS00651">
    <property type="entry name" value="RIBOSOMAL_L9"/>
    <property type="match status" value="1"/>
</dbReference>
<keyword id="KW-0687">Ribonucleoprotein</keyword>
<keyword id="KW-0689">Ribosomal protein</keyword>
<keyword id="KW-0694">RNA-binding</keyword>
<keyword id="KW-0699">rRNA-binding</keyword>
<name>RL9_BUCAT</name>
<sequence>MEVILLSKIKKLGDSGAVINVKSGYARNFLIPKGKAILANKKNIESFEAQRIALEKEKINELLIAQSRAEKLKKINSITILSKVGKEGKIFGSVGVRNIIKEIILLGIKINKKEIRLPNGLLRQVGEHIVVFQPHSKVSINFIVKIIAKN</sequence>
<protein>
    <recommendedName>
        <fullName evidence="1">Large ribosomal subunit protein bL9</fullName>
    </recommendedName>
    <alternativeName>
        <fullName evidence="2">50S ribosomal protein L9</fullName>
    </alternativeName>
</protein>
<organism>
    <name type="scientific">Buchnera aphidicola subsp. Acyrthosiphon pisum (strain Tuc7)</name>
    <dbReference type="NCBI Taxonomy" id="561501"/>
    <lineage>
        <taxon>Bacteria</taxon>
        <taxon>Pseudomonadati</taxon>
        <taxon>Pseudomonadota</taxon>
        <taxon>Gammaproteobacteria</taxon>
        <taxon>Enterobacterales</taxon>
        <taxon>Erwiniaceae</taxon>
        <taxon>Buchnera</taxon>
    </lineage>
</organism>
<feature type="chain" id="PRO_1000196231" description="Large ribosomal subunit protein bL9">
    <location>
        <begin position="1"/>
        <end position="150"/>
    </location>
</feature>